<dbReference type="EC" id="2.5.1.16" evidence="2"/>
<dbReference type="EMBL" id="AE014075">
    <property type="protein sequence ID" value="AAN78644.1"/>
    <property type="molecule type" value="Genomic_DNA"/>
</dbReference>
<dbReference type="RefSeq" id="WP_000818414.1">
    <property type="nucleotide sequence ID" value="NZ_CP051263.1"/>
</dbReference>
<dbReference type="SMR" id="P66833"/>
<dbReference type="STRING" id="199310.c0150"/>
<dbReference type="KEGG" id="ecc:c0150"/>
<dbReference type="eggNOG" id="COG0421">
    <property type="taxonomic scope" value="Bacteria"/>
</dbReference>
<dbReference type="HOGENOM" id="CLU_048199_0_0_6"/>
<dbReference type="BioCyc" id="ECOL199310:C0150-MONOMER"/>
<dbReference type="UniPathway" id="UPA00248">
    <property type="reaction ID" value="UER00314"/>
</dbReference>
<dbReference type="Proteomes" id="UP000001410">
    <property type="component" value="Chromosome"/>
</dbReference>
<dbReference type="GO" id="GO:0005829">
    <property type="term" value="C:cytosol"/>
    <property type="evidence" value="ECO:0007669"/>
    <property type="project" value="TreeGrafter"/>
</dbReference>
<dbReference type="GO" id="GO:0004766">
    <property type="term" value="F:spermidine synthase activity"/>
    <property type="evidence" value="ECO:0007669"/>
    <property type="project" value="UniProtKB-UniRule"/>
</dbReference>
<dbReference type="GO" id="GO:0008295">
    <property type="term" value="P:spermidine biosynthetic process"/>
    <property type="evidence" value="ECO:0007669"/>
    <property type="project" value="UniProtKB-UniRule"/>
</dbReference>
<dbReference type="CDD" id="cd02440">
    <property type="entry name" value="AdoMet_MTases"/>
    <property type="match status" value="1"/>
</dbReference>
<dbReference type="FunFam" id="2.30.140.10:FF:000002">
    <property type="entry name" value="Polyamine aminopropyltransferase"/>
    <property type="match status" value="1"/>
</dbReference>
<dbReference type="FunFam" id="3.40.50.150:FF:000026">
    <property type="entry name" value="Polyamine aminopropyltransferase"/>
    <property type="match status" value="1"/>
</dbReference>
<dbReference type="Gene3D" id="2.30.140.10">
    <property type="entry name" value="Spermidine synthase, tetramerisation domain"/>
    <property type="match status" value="1"/>
</dbReference>
<dbReference type="Gene3D" id="3.40.50.150">
    <property type="entry name" value="Vaccinia Virus protein VP39"/>
    <property type="match status" value="1"/>
</dbReference>
<dbReference type="HAMAP" id="MF_00198">
    <property type="entry name" value="Spermidine_synth"/>
    <property type="match status" value="1"/>
</dbReference>
<dbReference type="InterPro" id="IPR030374">
    <property type="entry name" value="PABS"/>
</dbReference>
<dbReference type="InterPro" id="IPR030373">
    <property type="entry name" value="PABS_CS"/>
</dbReference>
<dbReference type="InterPro" id="IPR029063">
    <property type="entry name" value="SAM-dependent_MTases_sf"/>
</dbReference>
<dbReference type="InterPro" id="IPR001045">
    <property type="entry name" value="Spermi_synthase"/>
</dbReference>
<dbReference type="InterPro" id="IPR035246">
    <property type="entry name" value="Spermidine_synt_N"/>
</dbReference>
<dbReference type="InterPro" id="IPR037163">
    <property type="entry name" value="Spermidine_synt_N_sf"/>
</dbReference>
<dbReference type="NCBIfam" id="NF037959">
    <property type="entry name" value="MFS_SpdSyn"/>
    <property type="match status" value="1"/>
</dbReference>
<dbReference type="NCBIfam" id="NF002010">
    <property type="entry name" value="PRK00811.1"/>
    <property type="match status" value="1"/>
</dbReference>
<dbReference type="NCBIfam" id="TIGR00417">
    <property type="entry name" value="speE"/>
    <property type="match status" value="1"/>
</dbReference>
<dbReference type="PANTHER" id="PTHR11558:SF11">
    <property type="entry name" value="SPERMIDINE SYNTHASE"/>
    <property type="match status" value="1"/>
</dbReference>
<dbReference type="PANTHER" id="PTHR11558">
    <property type="entry name" value="SPERMIDINE/SPERMINE SYNTHASE"/>
    <property type="match status" value="1"/>
</dbReference>
<dbReference type="Pfam" id="PF17284">
    <property type="entry name" value="Spermine_synt_N"/>
    <property type="match status" value="1"/>
</dbReference>
<dbReference type="Pfam" id="PF01564">
    <property type="entry name" value="Spermine_synth"/>
    <property type="match status" value="1"/>
</dbReference>
<dbReference type="SUPFAM" id="SSF53335">
    <property type="entry name" value="S-adenosyl-L-methionine-dependent methyltransferases"/>
    <property type="match status" value="1"/>
</dbReference>
<dbReference type="PROSITE" id="PS01330">
    <property type="entry name" value="PABS_1"/>
    <property type="match status" value="1"/>
</dbReference>
<dbReference type="PROSITE" id="PS51006">
    <property type="entry name" value="PABS_2"/>
    <property type="match status" value="1"/>
</dbReference>
<feature type="initiator methionine" description="Removed" evidence="1">
    <location>
        <position position="1"/>
    </location>
</feature>
<feature type="chain" id="PRO_0000156480" description="Polyamine aminopropyltransferase">
    <location>
        <begin position="2"/>
        <end position="288"/>
    </location>
</feature>
<feature type="domain" description="PABS" evidence="2">
    <location>
        <begin position="9"/>
        <end position="238"/>
    </location>
</feature>
<feature type="active site" description="Proton acceptor" evidence="2">
    <location>
        <position position="158"/>
    </location>
</feature>
<feature type="binding site" evidence="2">
    <location>
        <position position="33"/>
    </location>
    <ligand>
        <name>S-methyl-5'-thioadenosine</name>
        <dbReference type="ChEBI" id="CHEBI:17509"/>
    </ligand>
</feature>
<feature type="binding site" evidence="2">
    <location>
        <position position="64"/>
    </location>
    <ligand>
        <name>spermidine</name>
        <dbReference type="ChEBI" id="CHEBI:57834"/>
    </ligand>
</feature>
<feature type="binding site" evidence="2">
    <location>
        <position position="88"/>
    </location>
    <ligand>
        <name>spermidine</name>
        <dbReference type="ChEBI" id="CHEBI:57834"/>
    </ligand>
</feature>
<feature type="binding site" evidence="2">
    <location>
        <position position="108"/>
    </location>
    <ligand>
        <name>S-methyl-5'-thioadenosine</name>
        <dbReference type="ChEBI" id="CHEBI:17509"/>
    </ligand>
</feature>
<feature type="binding site" evidence="2">
    <location>
        <begin position="140"/>
        <end position="141"/>
    </location>
    <ligand>
        <name>S-methyl-5'-thioadenosine</name>
        <dbReference type="ChEBI" id="CHEBI:17509"/>
    </ligand>
</feature>
<feature type="binding site" evidence="2">
    <location>
        <begin position="158"/>
        <end position="161"/>
    </location>
    <ligand>
        <name>spermidine</name>
        <dbReference type="ChEBI" id="CHEBI:57834"/>
    </ligand>
</feature>
<feature type="binding site" evidence="2">
    <location>
        <position position="165"/>
    </location>
    <ligand>
        <name>S-methyl-5'-thioadenosine</name>
        <dbReference type="ChEBI" id="CHEBI:17509"/>
    </ligand>
</feature>
<evidence type="ECO:0000250" key="1"/>
<evidence type="ECO:0000255" key="2">
    <source>
        <dbReference type="HAMAP-Rule" id="MF_00198"/>
    </source>
</evidence>
<protein>
    <recommendedName>
        <fullName evidence="2">Polyamine aminopropyltransferase</fullName>
    </recommendedName>
    <alternativeName>
        <fullName evidence="2">Putrescine aminopropyltransferase</fullName>
        <shortName evidence="2">PAPT</shortName>
    </alternativeName>
    <alternativeName>
        <fullName evidence="2">Spermidine synthase</fullName>
        <shortName evidence="2">SPDS</shortName>
        <shortName evidence="2">SPDSY</shortName>
        <ecNumber evidence="2">2.5.1.16</ecNumber>
    </alternativeName>
</protein>
<name>SPEE_ECOL6</name>
<sequence length="288" mass="32307">MAEKKQWHETLHDQFGQYFAVDNVLYHEKTDHQDLIIFENAAFGRVMALDGVVQTTERDEFIYHEMMTHVPLLAHGHAKHVLIIGGGDGAMLREVTRHKNVESITMVEIDAGVVSFCRQYLPNHNAGSYDDPRFKLVIDDGVNFVNQTSQTFDVIISDCTDPIGPGESLFTSAFYEGCKRCLNPGGIFVAQNGVCFLQQEEAIDSHRKLSHYFSDVGFYQAAIPTYYGGIMTFAWATDNDALRHLSTEIIQARFLASGLKCRYYNPAVHTAAFALPQYLQDALASQPS</sequence>
<keyword id="KW-0963">Cytoplasm</keyword>
<keyword id="KW-0620">Polyamine biosynthesis</keyword>
<keyword id="KW-1185">Reference proteome</keyword>
<keyword id="KW-0745">Spermidine biosynthesis</keyword>
<keyword id="KW-0808">Transferase</keyword>
<comment type="function">
    <text evidence="2">Catalyzes the irreversible transfer of a propylamine group from the amino donor S-adenosylmethioninamine (decarboxy-AdoMet) to putrescine (1,4-diaminobutane) to yield spermidine.</text>
</comment>
<comment type="catalytic activity">
    <reaction evidence="2">
        <text>S-adenosyl 3-(methylsulfanyl)propylamine + putrescine = S-methyl-5'-thioadenosine + spermidine + H(+)</text>
        <dbReference type="Rhea" id="RHEA:12721"/>
        <dbReference type="ChEBI" id="CHEBI:15378"/>
        <dbReference type="ChEBI" id="CHEBI:17509"/>
        <dbReference type="ChEBI" id="CHEBI:57443"/>
        <dbReference type="ChEBI" id="CHEBI:57834"/>
        <dbReference type="ChEBI" id="CHEBI:326268"/>
        <dbReference type="EC" id="2.5.1.16"/>
    </reaction>
</comment>
<comment type="pathway">
    <text evidence="2">Amine and polyamine biosynthesis; spermidine biosynthesis; spermidine from putrescine: step 1/1.</text>
</comment>
<comment type="subunit">
    <text evidence="2">Homodimer or homotetramer.</text>
</comment>
<comment type="subcellular location">
    <subcellularLocation>
        <location evidence="2">Cytoplasm</location>
    </subcellularLocation>
</comment>
<comment type="similarity">
    <text evidence="2">Belongs to the spermidine/spermine synthase family.</text>
</comment>
<organism>
    <name type="scientific">Escherichia coli O6:H1 (strain CFT073 / ATCC 700928 / UPEC)</name>
    <dbReference type="NCBI Taxonomy" id="199310"/>
    <lineage>
        <taxon>Bacteria</taxon>
        <taxon>Pseudomonadati</taxon>
        <taxon>Pseudomonadota</taxon>
        <taxon>Gammaproteobacteria</taxon>
        <taxon>Enterobacterales</taxon>
        <taxon>Enterobacteriaceae</taxon>
        <taxon>Escherichia</taxon>
    </lineage>
</organism>
<reference key="1">
    <citation type="journal article" date="2002" name="Proc. Natl. Acad. Sci. U.S.A.">
        <title>Extensive mosaic structure revealed by the complete genome sequence of uropathogenic Escherichia coli.</title>
        <authorList>
            <person name="Welch R.A."/>
            <person name="Burland V."/>
            <person name="Plunkett G. III"/>
            <person name="Redford P."/>
            <person name="Roesch P."/>
            <person name="Rasko D."/>
            <person name="Buckles E.L."/>
            <person name="Liou S.-R."/>
            <person name="Boutin A."/>
            <person name="Hackett J."/>
            <person name="Stroud D."/>
            <person name="Mayhew G.F."/>
            <person name="Rose D.J."/>
            <person name="Zhou S."/>
            <person name="Schwartz D.C."/>
            <person name="Perna N.T."/>
            <person name="Mobley H.L.T."/>
            <person name="Donnenberg M.S."/>
            <person name="Blattner F.R."/>
        </authorList>
    </citation>
    <scope>NUCLEOTIDE SEQUENCE [LARGE SCALE GENOMIC DNA]</scope>
    <source>
        <strain>CFT073 / ATCC 700928 / UPEC</strain>
    </source>
</reference>
<proteinExistence type="inferred from homology"/>
<accession>P66833</accession>
<accession>Q8X951</accession>
<gene>
    <name evidence="2" type="primary">speE</name>
    <name type="ordered locus">c0150</name>
</gene>